<dbReference type="EMBL" id="X53935">
    <property type="protein sequence ID" value="CAA37882.1"/>
    <property type="molecule type" value="mRNA"/>
</dbReference>
<dbReference type="EMBL" id="M58716">
    <property type="protein sequence ID" value="AAA41268.1"/>
    <property type="molecule type" value="mRNA"/>
</dbReference>
<dbReference type="PIR" id="A38690">
    <property type="entry name" value="A38690"/>
</dbReference>
<dbReference type="SMR" id="P19218"/>
<dbReference type="FunCoup" id="P19218">
    <property type="interactions" value="9"/>
</dbReference>
<dbReference type="STRING" id="10116.ENSRNOP00000069047"/>
<dbReference type="GlyCosmos" id="P19218">
    <property type="glycosylation" value="7 sites, No reported glycans"/>
</dbReference>
<dbReference type="GlyGen" id="P19218">
    <property type="glycosylation" value="8 sites"/>
</dbReference>
<dbReference type="PhosphoSitePlus" id="P19218"/>
<dbReference type="PaxDb" id="10116-ENSRNOP00000021249"/>
<dbReference type="UCSC" id="RGD:621695">
    <property type="organism name" value="rat"/>
</dbReference>
<dbReference type="AGR" id="RGD:621695"/>
<dbReference type="RGD" id="621695">
    <property type="gene designation" value="Gp2"/>
</dbReference>
<dbReference type="eggNOG" id="ENOG502QT6B">
    <property type="taxonomic scope" value="Eukaryota"/>
</dbReference>
<dbReference type="InParanoid" id="P19218"/>
<dbReference type="PhylomeDB" id="P19218"/>
<dbReference type="Reactome" id="R-RNO-163125">
    <property type="pathway name" value="Post-translational modification: synthesis of GPI-anchored proteins"/>
</dbReference>
<dbReference type="PRO" id="PR:P19218"/>
<dbReference type="Proteomes" id="UP000002494">
    <property type="component" value="Unplaced"/>
</dbReference>
<dbReference type="GO" id="GO:0016324">
    <property type="term" value="C:apical plasma membrane"/>
    <property type="evidence" value="ECO:0000266"/>
    <property type="project" value="RGD"/>
</dbReference>
<dbReference type="GO" id="GO:0009986">
    <property type="term" value="C:cell surface"/>
    <property type="evidence" value="ECO:0000318"/>
    <property type="project" value="GO_Central"/>
</dbReference>
<dbReference type="GO" id="GO:0005768">
    <property type="term" value="C:endosome"/>
    <property type="evidence" value="ECO:0000250"/>
    <property type="project" value="UniProtKB"/>
</dbReference>
<dbReference type="GO" id="GO:0009897">
    <property type="term" value="C:external side of plasma membrane"/>
    <property type="evidence" value="ECO:0000314"/>
    <property type="project" value="UniProtKB"/>
</dbReference>
<dbReference type="GO" id="GO:0005615">
    <property type="term" value="C:extracellular space"/>
    <property type="evidence" value="ECO:0000250"/>
    <property type="project" value="UniProtKB"/>
</dbReference>
<dbReference type="GO" id="GO:0045121">
    <property type="term" value="C:membrane raft"/>
    <property type="evidence" value="ECO:0007669"/>
    <property type="project" value="UniProtKB-SubCell"/>
</dbReference>
<dbReference type="GO" id="GO:0042589">
    <property type="term" value="C:zymogen granule membrane"/>
    <property type="evidence" value="ECO:0000314"/>
    <property type="project" value="UniProtKB"/>
</dbReference>
<dbReference type="GO" id="GO:0003823">
    <property type="term" value="F:antigen binding"/>
    <property type="evidence" value="ECO:0000266"/>
    <property type="project" value="RGD"/>
</dbReference>
<dbReference type="GO" id="GO:0002412">
    <property type="term" value="P:antigen transcytosis by M cells in mucosal-associated lymphoid tissue"/>
    <property type="evidence" value="ECO:0000266"/>
    <property type="project" value="RGD"/>
</dbReference>
<dbReference type="GO" id="GO:0051649">
    <property type="term" value="P:establishment of localization in cell"/>
    <property type="evidence" value="ECO:0000266"/>
    <property type="project" value="RGD"/>
</dbReference>
<dbReference type="GO" id="GO:0045087">
    <property type="term" value="P:innate immune response"/>
    <property type="evidence" value="ECO:0007669"/>
    <property type="project" value="UniProtKB-KW"/>
</dbReference>
<dbReference type="GO" id="GO:1990266">
    <property type="term" value="P:neutrophil migration"/>
    <property type="evidence" value="ECO:0000318"/>
    <property type="project" value="GO_Central"/>
</dbReference>
<dbReference type="FunFam" id="2.60.40.4100:FF:000001">
    <property type="entry name" value="alpha-tectorin isoform X1"/>
    <property type="match status" value="1"/>
</dbReference>
<dbReference type="FunFam" id="2.60.40.3210:FF:000003">
    <property type="entry name" value="Glycoprotein 2"/>
    <property type="match status" value="1"/>
</dbReference>
<dbReference type="Gene3D" id="2.60.40.4100">
    <property type="entry name" value="Zona pellucida, ZP-C domain"/>
    <property type="match status" value="1"/>
</dbReference>
<dbReference type="Gene3D" id="2.60.40.3210">
    <property type="entry name" value="Zona pellucida, ZP-N domain"/>
    <property type="match status" value="1"/>
</dbReference>
<dbReference type="InterPro" id="IPR055355">
    <property type="entry name" value="ZP-C"/>
</dbReference>
<dbReference type="InterPro" id="IPR042235">
    <property type="entry name" value="ZP-C_dom"/>
</dbReference>
<dbReference type="InterPro" id="IPR055356">
    <property type="entry name" value="ZP-N"/>
</dbReference>
<dbReference type="InterPro" id="IPR048290">
    <property type="entry name" value="ZP_chr"/>
</dbReference>
<dbReference type="InterPro" id="IPR001507">
    <property type="entry name" value="ZP_dom"/>
</dbReference>
<dbReference type="InterPro" id="IPR017977">
    <property type="entry name" value="ZP_dom_CS"/>
</dbReference>
<dbReference type="PANTHER" id="PTHR14002">
    <property type="entry name" value="ENDOGLIN/TGF-BETA RECEPTOR TYPE III"/>
    <property type="match status" value="1"/>
</dbReference>
<dbReference type="PANTHER" id="PTHR14002:SF16">
    <property type="entry name" value="PANCREATIC SECRETORY GRANULE MEMBRANE MAJOR GLYCOPROTEIN GP2"/>
    <property type="match status" value="1"/>
</dbReference>
<dbReference type="Pfam" id="PF23283">
    <property type="entry name" value="D8C_UMOD"/>
    <property type="match status" value="1"/>
</dbReference>
<dbReference type="Pfam" id="PF00100">
    <property type="entry name" value="Zona_pellucida"/>
    <property type="match status" value="1"/>
</dbReference>
<dbReference type="Pfam" id="PF23344">
    <property type="entry name" value="ZP-N"/>
    <property type="match status" value="1"/>
</dbReference>
<dbReference type="PRINTS" id="PR00023">
    <property type="entry name" value="ZPELLUCIDA"/>
</dbReference>
<dbReference type="SMART" id="SM00241">
    <property type="entry name" value="ZP"/>
    <property type="match status" value="1"/>
</dbReference>
<dbReference type="PROSITE" id="PS00682">
    <property type="entry name" value="ZP_1"/>
    <property type="match status" value="1"/>
</dbReference>
<dbReference type="PROSITE" id="PS51034">
    <property type="entry name" value="ZP_2"/>
    <property type="match status" value="1"/>
</dbReference>
<evidence type="ECO:0000250" key="1">
    <source>
        <dbReference type="UniProtKB" id="P07911"/>
    </source>
</evidence>
<evidence type="ECO:0000250" key="2">
    <source>
        <dbReference type="UniProtKB" id="P25291"/>
    </source>
</evidence>
<evidence type="ECO:0000250" key="3">
    <source>
        <dbReference type="UniProtKB" id="P55259"/>
    </source>
</evidence>
<evidence type="ECO:0000250" key="4">
    <source>
        <dbReference type="UniProtKB" id="Q9D733"/>
    </source>
</evidence>
<evidence type="ECO:0000255" key="5"/>
<evidence type="ECO:0000255" key="6">
    <source>
        <dbReference type="PROSITE-ProRule" id="PRU00076"/>
    </source>
</evidence>
<evidence type="ECO:0000255" key="7">
    <source>
        <dbReference type="PROSITE-ProRule" id="PRU00375"/>
    </source>
</evidence>
<evidence type="ECO:0000269" key="8">
    <source>
    </source>
</evidence>
<evidence type="ECO:0000269" key="9">
    <source>
    </source>
</evidence>
<evidence type="ECO:0000269" key="10">
    <source>
    </source>
</evidence>
<evidence type="ECO:0000303" key="11">
    <source>
    </source>
</evidence>
<evidence type="ECO:0000305" key="12"/>
<evidence type="ECO:0000305" key="13">
    <source>
    </source>
</evidence>
<evidence type="ECO:0000305" key="14">
    <source>
    </source>
</evidence>
<evidence type="ECO:0000312" key="15">
    <source>
        <dbReference type="RGD" id="621695"/>
    </source>
</evidence>
<name>GP2_RAT</name>
<protein>
    <recommendedName>
        <fullName evidence="13">Pancreatic secretory granule membrane major glycoprotein GP2</fullName>
    </recommendedName>
    <alternativeName>
        <fullName evidence="11">Glycoprotein 80</fullName>
        <shortName evidence="11">gp80</shortName>
    </alternativeName>
    <alternativeName>
        <fullName evidence="13">Pancreatic zymogen granule membrane protein GP-2</fullName>
    </alternativeName>
</protein>
<gene>
    <name evidence="15" type="primary">Gp2</name>
</gene>
<feature type="signal peptide" evidence="2">
    <location>
        <begin position="1"/>
        <end position="21"/>
    </location>
</feature>
<feature type="chain" id="PRO_0000041661" description="Pancreatic secretory granule membrane major glycoprotein GP2">
    <location>
        <begin position="22"/>
        <end position="505"/>
    </location>
</feature>
<feature type="propeptide" id="PRO_0000041662" description="Removed in mature form" evidence="5">
    <location>
        <begin position="506"/>
        <end position="530"/>
    </location>
</feature>
<feature type="domain" description="EGF-like" evidence="12">
    <location>
        <begin position="179"/>
        <end position="223"/>
    </location>
</feature>
<feature type="domain" description="ZP" evidence="7">
    <location>
        <begin position="221"/>
        <end position="477"/>
    </location>
</feature>
<feature type="region of interest" description="D10C" evidence="3">
    <location>
        <begin position="54"/>
        <end position="74"/>
    </location>
</feature>
<feature type="region of interest" description="ZP-N" evidence="1">
    <location>
        <begin position="221"/>
        <end position="314"/>
    </location>
</feature>
<feature type="region of interest" description="Flexible ZP-N/ZP-C linker" evidence="1">
    <location>
        <begin position="315"/>
        <end position="338"/>
    </location>
</feature>
<feature type="region of interest" description="ZP-C" evidence="1">
    <location>
        <begin position="339"/>
        <end position="477"/>
    </location>
</feature>
<feature type="region of interest" description="Internal hydrophobic patch (IHP)" evidence="1">
    <location>
        <begin position="339"/>
        <end position="350"/>
    </location>
</feature>
<feature type="region of interest" description="External hydrophobic patch (EHP)" evidence="1">
    <location>
        <begin position="484"/>
        <end position="492"/>
    </location>
</feature>
<feature type="lipid moiety-binding region" description="GPI-anchor amidated asparagine" evidence="5">
    <location>
        <position position="505"/>
    </location>
</feature>
<feature type="glycosylation site" description="N-linked (GlcNAc...) asparagine" evidence="5">
    <location>
        <position position="33"/>
    </location>
</feature>
<feature type="glycosylation site" description="N-linked (GlcNAc...) asparagine" evidence="5">
    <location>
        <position position="58"/>
    </location>
</feature>
<feature type="glycosylation site" description="N-linked (GlcNAc...) asparagine" evidence="5">
    <location>
        <position position="127"/>
    </location>
</feature>
<feature type="glycosylation site" description="N-linked (GlcNAc...) asparagine" evidence="5">
    <location>
        <position position="197"/>
    </location>
</feature>
<feature type="glycosylation site" description="N-linked (GlcNAc...) asparagine" evidence="5">
    <location>
        <position position="209"/>
    </location>
</feature>
<feature type="glycosylation site" description="N-linked (GlcNAc...) asparagine" evidence="5">
    <location>
        <position position="284"/>
    </location>
</feature>
<feature type="glycosylation site" description="N-linked (GlcNAc...) asparagine" evidence="5">
    <location>
        <position position="320"/>
    </location>
</feature>
<feature type="disulfide bond" evidence="3">
    <location>
        <begin position="41"/>
        <end position="52"/>
    </location>
</feature>
<feature type="disulfide bond" evidence="3">
    <location>
        <begin position="56"/>
        <end position="150"/>
    </location>
</feature>
<feature type="disulfide bond" evidence="3">
    <location>
        <begin position="78"/>
        <end position="168"/>
    </location>
</feature>
<feature type="disulfide bond" evidence="3">
    <location>
        <begin position="100"/>
        <end position="138"/>
    </location>
</feature>
<feature type="disulfide bond" evidence="3">
    <location>
        <begin position="106"/>
        <end position="173"/>
    </location>
</feature>
<feature type="disulfide bond" evidence="3">
    <location>
        <begin position="131"/>
        <end position="139"/>
    </location>
</feature>
<feature type="disulfide bond" evidence="1">
    <location>
        <begin position="183"/>
        <end position="193"/>
    </location>
</feature>
<feature type="disulfide bond" evidence="1">
    <location>
        <begin position="187"/>
        <end position="202"/>
    </location>
</feature>
<feature type="disulfide bond" evidence="1">
    <location>
        <begin position="204"/>
        <end position="234"/>
    </location>
</feature>
<feature type="disulfide bond" evidence="1">
    <location>
        <begin position="222"/>
        <end position="313"/>
    </location>
</feature>
<feature type="disulfide bond" evidence="1">
    <location>
        <begin position="254"/>
        <end position="277"/>
    </location>
</feature>
<feature type="disulfide bond" evidence="1 6">
    <location>
        <begin position="394"/>
        <end position="454"/>
    </location>
</feature>
<feature type="disulfide bond" evidence="1">
    <location>
        <begin position="415"/>
        <end position="470"/>
    </location>
</feature>
<feature type="disulfide bond" evidence="1">
    <location>
        <begin position="459"/>
        <end position="466"/>
    </location>
</feature>
<feature type="sequence conflict" description="In Ref. 2; AAA41268." evidence="12" ref="2">
    <original>Q</original>
    <variation>H</variation>
    <location>
        <position position="287"/>
    </location>
</feature>
<feature type="sequence conflict" description="In Ref. 2; AAA41268." evidence="12" ref="2">
    <original>A</original>
    <variation>V</variation>
    <location>
        <position position="377"/>
    </location>
</feature>
<organism>
    <name type="scientific">Rattus norvegicus</name>
    <name type="common">Rat</name>
    <dbReference type="NCBI Taxonomy" id="10116"/>
    <lineage>
        <taxon>Eukaryota</taxon>
        <taxon>Metazoa</taxon>
        <taxon>Chordata</taxon>
        <taxon>Craniata</taxon>
        <taxon>Vertebrata</taxon>
        <taxon>Euteleostomi</taxon>
        <taxon>Mammalia</taxon>
        <taxon>Eutheria</taxon>
        <taxon>Euarchontoglires</taxon>
        <taxon>Glires</taxon>
        <taxon>Rodentia</taxon>
        <taxon>Myomorpha</taxon>
        <taxon>Muroidea</taxon>
        <taxon>Muridae</taxon>
        <taxon>Murinae</taxon>
        <taxon>Rattus</taxon>
    </lineage>
</organism>
<proteinExistence type="evidence at protein level"/>
<keyword id="KW-1003">Cell membrane</keyword>
<keyword id="KW-0968">Cytoplasmic vesicle</keyword>
<keyword id="KW-0903">Direct protein sequencing</keyword>
<keyword id="KW-1015">Disulfide bond</keyword>
<keyword id="KW-0245">EGF-like domain</keyword>
<keyword id="KW-0967">Endosome</keyword>
<keyword id="KW-0325">Glycoprotein</keyword>
<keyword id="KW-0336">GPI-anchor</keyword>
<keyword id="KW-0391">Immunity</keyword>
<keyword id="KW-0399">Innate immunity</keyword>
<keyword id="KW-0449">Lipoprotein</keyword>
<keyword id="KW-0472">Membrane</keyword>
<keyword id="KW-0675">Receptor</keyword>
<keyword id="KW-1185">Reference proteome</keyword>
<keyword id="KW-0964">Secreted</keyword>
<keyword id="KW-0732">Signal</keyword>
<comment type="function">
    <text evidence="4">Functions as an intestinal M-cell transcytotic receptor specific of type-I-piliated bacteria that participates in the mucosal immune response toward these bacteria. At the apical membrane of M-cells it binds fimH, a protein of the bacteria type I pilus tip. Internalizes bound bacteria, like E.coli and S.typhimurium, from the lumen of the intestine and delivers them, through M-cells, to the underlying organized lymphoid follicles where they are captured by antigen-presenting dendritic cells to elicit a mucosal immune response.</text>
</comment>
<comment type="subunit">
    <text evidence="3 8">Interacts with SYCN (PubMed:11853552). Interacts with bacterial adhesin fimH (By similarity).</text>
</comment>
<comment type="subcellular location">
    <subcellularLocation>
        <location evidence="9 10">Zymogen granule membrane</location>
        <topology evidence="8 9">Lipid-anchor</topology>
        <topology evidence="8 9">GPI-anchor</topology>
    </subcellularLocation>
    <subcellularLocation>
        <location evidence="14">Secreted</location>
    </subcellularLocation>
    <subcellularLocation>
        <location evidence="9 10">Cell membrane</location>
        <topology evidence="8 9">Lipid-anchor</topology>
        <topology evidence="8 9">GPI-anchor</topology>
    </subcellularLocation>
    <subcellularLocation>
        <location evidence="4">Apical cell membrane</location>
        <topology evidence="8 9">Lipid-anchor</topology>
        <topology evidence="8 9">GPI-anchor</topology>
    </subcellularLocation>
    <subcellularLocation>
        <location evidence="8">Membrane raft</location>
        <topology evidence="8 9">Lipid-anchor</topology>
        <topology evidence="8 9">GPI-anchor</topology>
    </subcellularLocation>
    <subcellularLocation>
        <location evidence="4">Endosome</location>
    </subcellularLocation>
    <text evidence="14">Secreted, after cleavage, in the pancreatic juice.</text>
</comment>
<comment type="tissue specificity">
    <text evidence="9">Expressed in pancreas.</text>
</comment>
<comment type="domain">
    <text evidence="1">Each ZP domain consists of an N-terminal (ZP-N) and C-terminal (ZP-C) region connected by a flexible linker; the linker allows the ZP domain to wrap around the ZP-C subdomain of the preceding subunit.</text>
</comment>
<comment type="PTM">
    <text evidence="9 10">N-glycosylated.</text>
</comment>
<sequence>MVACDLLWLAAASCLLTLVFPSTTHQGYGNPRNTSNVDLDCGAPGSSSAGICFDPCQNHTVLNDPSRSTENTVSSEECDSHLRGWYRFVGDGGVKMPETCVNVYRCHTYAPMWLSGSHPILGDGIVNRTACANWNENCCFWSSEVQVKACLGESGEYHVYKLQGTPECSLRYCTDPSTAPKKCEIACRPEEECVFQNNSWTCVCRQDLNVSDTLSLQPLLDCGANEIKVKLDKCLLGGLGFKEDIITYLNDRNCRGTMKDEPNNWVSTTSPVVANDCGNILENNGTQAIYRNTLSLATDFIIRDFLVNVNFQCAYPLDMNVSLQTALQPIVSSLNVDVGGAGEFTVTMALFQDQSYTHPYEGSKVLLPVENILYVGALLNRGDTSRFKLLLTNCYATPSGDRNDIVKYFIIRNRCPNQRDSTINVEENGVSSESRFSVQMFMFAGNYDLVFLHCEVYLCDSTTEQCQPSCSTSRLRSSEPAIDLTRVLDIGPITKKSVQNPDTSNGTPRNTGFLLAWPTFFLPVFLAWLF</sequence>
<reference key="1">
    <citation type="journal article" date="1990" name="Nucleic Acids Res.">
        <title>Nucleotide sequence encoding the major glycoprotein (GP2) of rat pancreatic secretory (zymogen) granule membranes.</title>
        <authorList>
            <person name="Fukuoka S."/>
            <person name="Scheele G."/>
        </authorList>
    </citation>
    <scope>NUCLEOTIDE SEQUENCE [MRNA]</scope>
    <source>
        <strain>Wistar</strain>
        <tissue>Pancreas</tissue>
    </source>
</reference>
<reference key="2">
    <citation type="journal article" date="1991" name="J. Biol. Chem.">
        <title>Isolation of the cDNA encoding glycoprotein-2 (GP-2), the major zymogen granule membrane protein. Homology to uromodulin/Tamm-Horsfall protein.</title>
        <authorList>
            <person name="Hoops T.C."/>
            <person name="Rindler M.J."/>
        </authorList>
    </citation>
    <scope>NUCLEOTIDE SEQUENCE [MRNA]</scope>
    <scope>PROTEIN SEQUENCE OF 293-303 AND 477-495</scope>
    <scope>SUBCELLULAR LOCATION</scope>
    <scope>TOPOLOGY</scope>
    <scope>GLYCOSYLATION</scope>
    <scope>TISSUE SPECIFICITY</scope>
</reference>
<reference key="3">
    <citation type="journal article" date="1993" name="Biochem. Biophys. Res. Commun.">
        <title>Glycoprotein 2 of zymogen granule membranes shares immunological cross-reactivity and sequence similarity with phospholipase A2.</title>
        <authorList>
            <person name="Withiam-Leitch M."/>
            <person name="Aletta J.M."/>
            <person name="Koshlukova S.E."/>
            <person name="Rupp G."/>
            <person name="Beaudoin A.R."/>
            <person name="Rubin R.P."/>
        </authorList>
    </citation>
    <scope>PROTEIN SEQUENCE OF 327-512</scope>
</reference>
<reference key="4">
    <citation type="journal article" date="1984" name="Eur. J. Biochem.">
        <title>Intracellular transport of the major glycoprotein of zymogen granule membranes in the rat pancreas. Demonstration of high turnover at the plasma membrane.</title>
        <authorList>
            <person name="Havinga J.R."/>
            <person name="Strous G.J."/>
            <person name="Poort C."/>
        </authorList>
    </citation>
    <scope>SUBCELLULAR LOCATION</scope>
    <scope>GLYCOSYLATION</scope>
</reference>
<reference key="5">
    <citation type="journal article" date="2002" name="Biochem. J.">
        <title>Interaction of syncollin with GP-2, the major membrane protein of pancreatic zymogen granules, and association with lipid microdomains.</title>
        <authorList>
            <person name="Kalus I."/>
            <person name="Hodel A."/>
            <person name="Koch A."/>
            <person name="Kleene R."/>
            <person name="Edwardson J.M."/>
            <person name="Schrader M."/>
        </authorList>
    </citation>
    <scope>INTERACTION WITH SYCN</scope>
    <scope>SUBCELLULAR LOCATION</scope>
    <scope>TOPOLOGY</scope>
</reference>
<accession>P19218</accession>